<evidence type="ECO:0000250" key="1">
    <source>
        <dbReference type="UniProtKB" id="Q06994"/>
    </source>
</evidence>
<evidence type="ECO:0000269" key="2">
    <source>
    </source>
</evidence>
<evidence type="ECO:0000303" key="3">
    <source>
    </source>
</evidence>
<evidence type="ECO:0000303" key="4">
    <source>
    </source>
</evidence>
<evidence type="ECO:0000305" key="5"/>
<sequence>MKIAFIGEAVSGFGGMETVIRDVITTFRQQHIQSEMFFFCRNDKMDKGWLEGIKYSCSFSNIRLGFLRRAKHIHALSKWLQEYQPDIVICIDVISCLFAAKARKKSGIDMPVFSWPHFSLDHKKHAEYITCADYHLAISSGIKQQMINRGVAESTINVIFNPVETKDSVIPAPEEGETATFIYVGRMKFEGQKRVKDLLDGLSQAKGNWKLHVLGDGSDFEKCQAYGRELNIDDRIVWYGWQQYPWELVQQDIEKVSALLLTSSFEGFPMTLLEALSWGIPCISADCVSGPADIIQPDVNGHLYQPGDIAGFVTLLNKYIAGEIHIEHEKIPASIDEFYQSKYYDRLHKVIISAISRRK</sequence>
<reference key="1">
    <citation type="journal article" date="1992" name="J. Bacteriol.">
        <title>Structures of the rfaB, rfaI, rfaJ, and rfaS genes of Escherichia coli K-12 and their roles in assembly of the lipopolysaccharide core.</title>
        <authorList>
            <person name="Pradel E."/>
            <person name="Parker C.T."/>
            <person name="Schnaitman C.A."/>
        </authorList>
    </citation>
    <scope>NUCLEOTIDE SEQUENCE [GENOMIC DNA]</scope>
    <source>
        <strain>K12</strain>
    </source>
</reference>
<reference key="2">
    <citation type="journal article" date="1994" name="Nucleic Acids Res.">
        <title>Analysis of the Escherichia coli genome. V. DNA sequence of the region from 76.0 to 81.5 minutes.</title>
        <authorList>
            <person name="Sofia H.J."/>
            <person name="Burland V."/>
            <person name="Daniels D.L."/>
            <person name="Plunkett G. III"/>
            <person name="Blattner F.R."/>
        </authorList>
    </citation>
    <scope>NUCLEOTIDE SEQUENCE [LARGE SCALE GENOMIC DNA]</scope>
    <source>
        <strain>K12 / MG1655 / ATCC 47076</strain>
    </source>
</reference>
<reference key="3">
    <citation type="journal article" date="1997" name="Science">
        <title>The complete genome sequence of Escherichia coli K-12.</title>
        <authorList>
            <person name="Blattner F.R."/>
            <person name="Plunkett G. III"/>
            <person name="Bloch C.A."/>
            <person name="Perna N.T."/>
            <person name="Burland V."/>
            <person name="Riley M."/>
            <person name="Collado-Vides J."/>
            <person name="Glasner J.D."/>
            <person name="Rode C.K."/>
            <person name="Mayhew G.F."/>
            <person name="Gregor J."/>
            <person name="Davis N.W."/>
            <person name="Kirkpatrick H.A."/>
            <person name="Goeden M.A."/>
            <person name="Rose D.J."/>
            <person name="Mau B."/>
            <person name="Shao Y."/>
        </authorList>
    </citation>
    <scope>NUCLEOTIDE SEQUENCE [LARGE SCALE GENOMIC DNA]</scope>
    <source>
        <strain>K12 / MG1655 / ATCC 47076</strain>
    </source>
</reference>
<reference key="4">
    <citation type="journal article" date="2006" name="Mol. Syst. Biol.">
        <title>Highly accurate genome sequences of Escherichia coli K-12 strains MG1655 and W3110.</title>
        <authorList>
            <person name="Hayashi K."/>
            <person name="Morooka N."/>
            <person name="Yamamoto Y."/>
            <person name="Fujita K."/>
            <person name="Isono K."/>
            <person name="Choi S."/>
            <person name="Ohtsubo E."/>
            <person name="Baba T."/>
            <person name="Wanner B.L."/>
            <person name="Mori H."/>
            <person name="Horiuchi T."/>
        </authorList>
    </citation>
    <scope>NUCLEOTIDE SEQUENCE [LARGE SCALE GENOMIC DNA]</scope>
    <source>
        <strain>K12 / W3110 / ATCC 27325 / DSM 5911</strain>
    </source>
</reference>
<reference key="5">
    <citation type="journal article" date="1996" name="Trends Microbiol.">
        <title>Bacterial polysaccharide synthesis and gene nomenclature.</title>
        <authorList>
            <person name="Reeves P.R."/>
            <person name="Hobbs M."/>
            <person name="Valvano M.A."/>
            <person name="Skurnik M."/>
            <person name="Whitfield C."/>
            <person name="Coplin D."/>
            <person name="Kido N."/>
            <person name="Klena J."/>
            <person name="Maskell D."/>
            <person name="Raetz C.R.H."/>
            <person name="Rick P.D."/>
        </authorList>
    </citation>
    <scope>NOMENCLATURE</scope>
</reference>
<reference key="6">
    <citation type="journal article" date="2014" name="Biochemistry">
        <title>In vitro assembly of the outer core of the lipopolysaccharide from Escherichia coli K-12 and Salmonella typhimurium.</title>
        <authorList>
            <person name="Qian J."/>
            <person name="Garrett T.A."/>
            <person name="Raetz C.R."/>
        </authorList>
    </citation>
    <scope>FUNCTION</scope>
    <scope>CATALYTIC ACTIVITY</scope>
    <scope>PATHWAY</scope>
    <source>
        <strain>K12 / W3110 / ATCC 27325 / DSM 5911</strain>
    </source>
</reference>
<comment type="function">
    <text evidence="2">Galactosyltransferase involved in the biosynthesis of the core oligosaccharide region of lipopolysaccharide (LPS) (PubMed:24479701). Catalyzes the addition of galactose from UDP-galactose to the first glucose residue of the LPS outer core (PubMed:24479701). Cannot use other sugar donors, such as UDP-glucose, UDP-glucuronic acid, UDP-galacuronic acid, GDP-mannose, ADP-glucose and GDP-glucose (PubMed:24479701). In the absence of a lipid acceptor, can hydrolyze UDP-galactose to UDP and galactose (PubMed:24479701).</text>
</comment>
<comment type="catalytic activity">
    <reaction evidence="2">
        <text>alpha-D-Glc-(1-&gt;3)-[L-alpha-D-Hep-(1-&gt;7)]-4-O-PO3(2-)-L-alpha-D-Hep-(1-&gt;3)-4-O-PO3(2-)-L-alpha-D-Hep-(1-&gt;5)-[alpha-Kdo-(2-&gt;4)]-alpha-Kdo-(2-&gt;6)-lipid A + UDP-alpha-D-galactose = alpha-D-Gal-(1-&gt;6)-alpha-D-Glc-(1-&gt;3)-[L-alpha-D-Hep-(1-&gt;7)]-4-O-PO3(2-)-L-alpha-D-Hep-(1-&gt;3)-4-O-PO3(2-)-L-alpha-D-Hep-(1-&gt;5)-[alpha-Kdo-(2-&gt;4)]-alpha-Kdo-(2-&gt;6)-lipid A + UDP + H(+)</text>
        <dbReference type="Rhea" id="RHEA:29959"/>
        <dbReference type="ChEBI" id="CHEBI:15378"/>
        <dbReference type="ChEBI" id="CHEBI:58223"/>
        <dbReference type="ChEBI" id="CHEBI:62000"/>
        <dbReference type="ChEBI" id="CHEBI:62001"/>
        <dbReference type="ChEBI" id="CHEBI:66914"/>
    </reaction>
</comment>
<comment type="pathway">
    <text evidence="2">Bacterial outer membrane biogenesis; LPS core biosynthesis.</text>
</comment>
<comment type="similarity">
    <text evidence="5">Belongs to the glycosyltransferase group 1 family. Glycosyltransferase 4 subfamily.</text>
</comment>
<comment type="sequence caution" evidence="5">
    <conflict type="erroneous initiation">
        <sequence resource="EMBL-CDS" id="AAA24085"/>
    </conflict>
</comment>
<comment type="sequence caution" evidence="5">
    <conflict type="erroneous initiation">
        <sequence resource="EMBL-CDS" id="AAB18605"/>
    </conflict>
</comment>
<comment type="sequence caution" evidence="5">
    <conflict type="erroneous initiation">
        <sequence resource="EMBL-CDS" id="BAE77664"/>
    </conflict>
</comment>
<organism>
    <name type="scientific">Escherichia coli (strain K12)</name>
    <dbReference type="NCBI Taxonomy" id="83333"/>
    <lineage>
        <taxon>Bacteria</taxon>
        <taxon>Pseudomonadati</taxon>
        <taxon>Pseudomonadota</taxon>
        <taxon>Gammaproteobacteria</taxon>
        <taxon>Enterobacterales</taxon>
        <taxon>Enterobacteriaceae</taxon>
        <taxon>Escherichia</taxon>
    </lineage>
</organism>
<dbReference type="EC" id="2.4.1.-" evidence="2"/>
<dbReference type="EMBL" id="M80599">
    <property type="protein sequence ID" value="AAA24085.1"/>
    <property type="status" value="ALT_INIT"/>
    <property type="molecule type" value="Genomic_DNA"/>
</dbReference>
<dbReference type="EMBL" id="U00039">
    <property type="protein sequence ID" value="AAB18605.1"/>
    <property type="status" value="ALT_INIT"/>
    <property type="molecule type" value="Genomic_DNA"/>
</dbReference>
<dbReference type="EMBL" id="U00096">
    <property type="protein sequence ID" value="AAC76652.2"/>
    <property type="molecule type" value="Genomic_DNA"/>
</dbReference>
<dbReference type="EMBL" id="AP009048">
    <property type="protein sequence ID" value="BAE77664.1"/>
    <property type="status" value="ALT_INIT"/>
    <property type="molecule type" value="Genomic_DNA"/>
</dbReference>
<dbReference type="PIR" id="B42982">
    <property type="entry name" value="B42982"/>
</dbReference>
<dbReference type="RefSeq" id="NP_418085.2">
    <property type="nucleotide sequence ID" value="NC_000913.3"/>
</dbReference>
<dbReference type="RefSeq" id="WP_000683964.1">
    <property type="nucleotide sequence ID" value="NZ_LN832404.1"/>
</dbReference>
<dbReference type="SMR" id="P27127"/>
<dbReference type="BioGRID" id="4263407">
    <property type="interactions" value="264"/>
</dbReference>
<dbReference type="DIP" id="DIP-10663N"/>
<dbReference type="FunCoup" id="P27127">
    <property type="interactions" value="58"/>
</dbReference>
<dbReference type="IntAct" id="P27127">
    <property type="interactions" value="1"/>
</dbReference>
<dbReference type="STRING" id="511145.b3628"/>
<dbReference type="CAZy" id="GT4">
    <property type="family name" value="Glycosyltransferase Family 4"/>
</dbReference>
<dbReference type="jPOST" id="P27127"/>
<dbReference type="PaxDb" id="511145-b3628"/>
<dbReference type="EnsemblBacteria" id="AAC76652">
    <property type="protein sequence ID" value="AAC76652"/>
    <property type="gene ID" value="b3628"/>
</dbReference>
<dbReference type="GeneID" id="948144"/>
<dbReference type="KEGG" id="ecj:JW3603"/>
<dbReference type="KEGG" id="eco:b3628"/>
<dbReference type="KEGG" id="ecoc:C3026_19665"/>
<dbReference type="PATRIC" id="fig|1411691.4.peg.3078"/>
<dbReference type="EchoBASE" id="EB1326"/>
<dbReference type="eggNOG" id="COG0438">
    <property type="taxonomic scope" value="Bacteria"/>
</dbReference>
<dbReference type="HOGENOM" id="CLU_009583_0_0_6"/>
<dbReference type="InParanoid" id="P27127"/>
<dbReference type="OMA" id="LFSWPHF"/>
<dbReference type="OrthoDB" id="9777346at2"/>
<dbReference type="PhylomeDB" id="P27127"/>
<dbReference type="BioCyc" id="EcoCyc:EG11351-MONOMER"/>
<dbReference type="BioCyc" id="MetaCyc:EG11351-MONOMER"/>
<dbReference type="UniPathway" id="UPA00958"/>
<dbReference type="PRO" id="PR:P27127"/>
<dbReference type="Proteomes" id="UP000000625">
    <property type="component" value="Chromosome"/>
</dbReference>
<dbReference type="GO" id="GO:0005829">
    <property type="term" value="C:cytosol"/>
    <property type="evidence" value="ECO:0000314"/>
    <property type="project" value="EcoCyc"/>
</dbReference>
<dbReference type="GO" id="GO:0008921">
    <property type="term" value="F:lipopolysaccharide-1,6-galactosyltransferase activity"/>
    <property type="evidence" value="ECO:0000314"/>
    <property type="project" value="EcoCyc"/>
</dbReference>
<dbReference type="GO" id="GO:0009244">
    <property type="term" value="P:lipopolysaccharide core region biosynthetic process"/>
    <property type="evidence" value="ECO:0000315"/>
    <property type="project" value="EcoCyc"/>
</dbReference>
<dbReference type="CDD" id="cd03811">
    <property type="entry name" value="GT4_GT28_WabH-like"/>
    <property type="match status" value="1"/>
</dbReference>
<dbReference type="FunFam" id="3.40.50.2000:FF:000363">
    <property type="entry name" value="Lipopolysaccharide 1,6-galactosyltransferase"/>
    <property type="match status" value="1"/>
</dbReference>
<dbReference type="FunFam" id="3.40.50.2000:FF:000410">
    <property type="entry name" value="Lipopolysaccharide 1,6-galactosyltransferase"/>
    <property type="match status" value="1"/>
</dbReference>
<dbReference type="Gene3D" id="3.40.50.2000">
    <property type="entry name" value="Glycogen Phosphorylase B"/>
    <property type="match status" value="2"/>
</dbReference>
<dbReference type="InterPro" id="IPR001296">
    <property type="entry name" value="Glyco_trans_1"/>
</dbReference>
<dbReference type="InterPro" id="IPR028098">
    <property type="entry name" value="Glyco_trans_4-like_N"/>
</dbReference>
<dbReference type="NCBIfam" id="NF007396">
    <property type="entry name" value="PRK09922.1"/>
    <property type="match status" value="1"/>
</dbReference>
<dbReference type="PANTHER" id="PTHR12526">
    <property type="entry name" value="GLYCOSYLTRANSFERASE"/>
    <property type="match status" value="1"/>
</dbReference>
<dbReference type="PANTHER" id="PTHR12526:SF630">
    <property type="entry name" value="GLYCOSYLTRANSFERASE"/>
    <property type="match status" value="1"/>
</dbReference>
<dbReference type="Pfam" id="PF13439">
    <property type="entry name" value="Glyco_transf_4"/>
    <property type="match status" value="1"/>
</dbReference>
<dbReference type="Pfam" id="PF00534">
    <property type="entry name" value="Glycos_transf_1"/>
    <property type="match status" value="1"/>
</dbReference>
<dbReference type="SUPFAM" id="SSF53756">
    <property type="entry name" value="UDP-Glycosyltransferase/glycogen phosphorylase"/>
    <property type="match status" value="1"/>
</dbReference>
<name>WAAB_ECOLI</name>
<feature type="chain" id="PRO_0000080303" description="Lipopolysaccharide 1,6-galactosyltransferase">
    <location>
        <begin position="1"/>
        <end position="359"/>
    </location>
</feature>
<feature type="binding site" evidence="1">
    <location>
        <position position="242"/>
    </location>
    <ligand>
        <name>UDP</name>
        <dbReference type="ChEBI" id="CHEBI:58223"/>
    </ligand>
</feature>
<feature type="binding site" evidence="1">
    <location>
        <position position="274"/>
    </location>
    <ligand>
        <name>UDP</name>
        <dbReference type="ChEBI" id="CHEBI:58223"/>
    </ligand>
</feature>
<keyword id="KW-0328">Glycosyltransferase</keyword>
<keyword id="KW-0448">Lipopolysaccharide biosynthesis</keyword>
<keyword id="KW-1185">Reference proteome</keyword>
<keyword id="KW-0808">Transferase</keyword>
<proteinExistence type="evidence at protein level"/>
<accession>P27127</accession>
<accession>Q2M7U2</accession>
<protein>
    <recommendedName>
        <fullName evidence="5">Lipopolysaccharide 1,6-galactosyltransferase</fullName>
        <ecNumber evidence="2">2.4.1.-</ecNumber>
    </recommendedName>
    <alternativeName>
        <fullName>UDP-D-galactose:(Glucosyl)lipopolysaccharide-alpha-1,3-D-galactosyltransferase</fullName>
    </alternativeName>
</protein>
<gene>
    <name evidence="4" type="primary">waaB</name>
    <name evidence="3" type="synonym">rfaB</name>
    <name type="ordered locus">b3628</name>
    <name type="ordered locus">JW3603</name>
</gene>